<comment type="subcellular location">
    <subcellularLocation>
        <location evidence="4">Cell membrane</location>
        <topology evidence="4">Multi-pass membrane protein</topology>
    </subcellularLocation>
</comment>
<comment type="similarity">
    <text evidence="4">Belongs to the UPF0053 family.</text>
</comment>
<comment type="sequence caution" evidence="4">
    <conflict type="erroneous initiation">
        <sequence resource="EMBL-CDS" id="CAB07925"/>
    </conflict>
</comment>
<protein>
    <recommendedName>
        <fullName>UPF0053 protein YugS</fullName>
    </recommendedName>
</protein>
<keyword id="KW-0129">CBS domain</keyword>
<keyword id="KW-1003">Cell membrane</keyword>
<keyword id="KW-0472">Membrane</keyword>
<keyword id="KW-1185">Reference proteome</keyword>
<keyword id="KW-0677">Repeat</keyword>
<keyword id="KW-0812">Transmembrane</keyword>
<keyword id="KW-1133">Transmembrane helix</keyword>
<organism>
    <name type="scientific">Bacillus subtilis (strain 168)</name>
    <dbReference type="NCBI Taxonomy" id="224308"/>
    <lineage>
        <taxon>Bacteria</taxon>
        <taxon>Bacillati</taxon>
        <taxon>Bacillota</taxon>
        <taxon>Bacilli</taxon>
        <taxon>Bacillales</taxon>
        <taxon>Bacillaceae</taxon>
        <taxon>Bacillus</taxon>
    </lineage>
</organism>
<reference key="1">
    <citation type="journal article" date="1997" name="Microbiology">
        <title>Analysis of the Bacillus subtilis genome: cloning and nucleotide sequence of a 62 kb region between 275 degrees (rrnB) and 284 degrees (pai).</title>
        <authorList>
            <person name="Oudega B."/>
            <person name="Koningstein G."/>
            <person name="Rodrigues L."/>
            <person name="de Sales Ramon M."/>
            <person name="Hilbert H."/>
            <person name="Duesterhoeft A."/>
            <person name="Pohl T.M."/>
            <person name="Weitzenegger T."/>
        </authorList>
    </citation>
    <scope>NUCLEOTIDE SEQUENCE [GENOMIC DNA]</scope>
    <source>
        <strain>168</strain>
    </source>
</reference>
<reference key="2">
    <citation type="journal article" date="1997" name="Nature">
        <title>The complete genome sequence of the Gram-positive bacterium Bacillus subtilis.</title>
        <authorList>
            <person name="Kunst F."/>
            <person name="Ogasawara N."/>
            <person name="Moszer I."/>
            <person name="Albertini A.M."/>
            <person name="Alloni G."/>
            <person name="Azevedo V."/>
            <person name="Bertero M.G."/>
            <person name="Bessieres P."/>
            <person name="Bolotin A."/>
            <person name="Borchert S."/>
            <person name="Borriss R."/>
            <person name="Boursier L."/>
            <person name="Brans A."/>
            <person name="Braun M."/>
            <person name="Brignell S.C."/>
            <person name="Bron S."/>
            <person name="Brouillet S."/>
            <person name="Bruschi C.V."/>
            <person name="Caldwell B."/>
            <person name="Capuano V."/>
            <person name="Carter N.M."/>
            <person name="Choi S.-K."/>
            <person name="Codani J.-J."/>
            <person name="Connerton I.F."/>
            <person name="Cummings N.J."/>
            <person name="Daniel R.A."/>
            <person name="Denizot F."/>
            <person name="Devine K.M."/>
            <person name="Duesterhoeft A."/>
            <person name="Ehrlich S.D."/>
            <person name="Emmerson P.T."/>
            <person name="Entian K.-D."/>
            <person name="Errington J."/>
            <person name="Fabret C."/>
            <person name="Ferrari E."/>
            <person name="Foulger D."/>
            <person name="Fritz C."/>
            <person name="Fujita M."/>
            <person name="Fujita Y."/>
            <person name="Fuma S."/>
            <person name="Galizzi A."/>
            <person name="Galleron N."/>
            <person name="Ghim S.-Y."/>
            <person name="Glaser P."/>
            <person name="Goffeau A."/>
            <person name="Golightly E.J."/>
            <person name="Grandi G."/>
            <person name="Guiseppi G."/>
            <person name="Guy B.J."/>
            <person name="Haga K."/>
            <person name="Haiech J."/>
            <person name="Harwood C.R."/>
            <person name="Henaut A."/>
            <person name="Hilbert H."/>
            <person name="Holsappel S."/>
            <person name="Hosono S."/>
            <person name="Hullo M.-F."/>
            <person name="Itaya M."/>
            <person name="Jones L.-M."/>
            <person name="Joris B."/>
            <person name="Karamata D."/>
            <person name="Kasahara Y."/>
            <person name="Klaerr-Blanchard M."/>
            <person name="Klein C."/>
            <person name="Kobayashi Y."/>
            <person name="Koetter P."/>
            <person name="Koningstein G."/>
            <person name="Krogh S."/>
            <person name="Kumano M."/>
            <person name="Kurita K."/>
            <person name="Lapidus A."/>
            <person name="Lardinois S."/>
            <person name="Lauber J."/>
            <person name="Lazarevic V."/>
            <person name="Lee S.-M."/>
            <person name="Levine A."/>
            <person name="Liu H."/>
            <person name="Masuda S."/>
            <person name="Mauel C."/>
            <person name="Medigue C."/>
            <person name="Medina N."/>
            <person name="Mellado R.P."/>
            <person name="Mizuno M."/>
            <person name="Moestl D."/>
            <person name="Nakai S."/>
            <person name="Noback M."/>
            <person name="Noone D."/>
            <person name="O'Reilly M."/>
            <person name="Ogawa K."/>
            <person name="Ogiwara A."/>
            <person name="Oudega B."/>
            <person name="Park S.-H."/>
            <person name="Parro V."/>
            <person name="Pohl T.M."/>
            <person name="Portetelle D."/>
            <person name="Porwollik S."/>
            <person name="Prescott A.M."/>
            <person name="Presecan E."/>
            <person name="Pujic P."/>
            <person name="Purnelle B."/>
            <person name="Rapoport G."/>
            <person name="Rey M."/>
            <person name="Reynolds S."/>
            <person name="Rieger M."/>
            <person name="Rivolta C."/>
            <person name="Rocha E."/>
            <person name="Roche B."/>
            <person name="Rose M."/>
            <person name="Sadaie Y."/>
            <person name="Sato T."/>
            <person name="Scanlan E."/>
            <person name="Schleich S."/>
            <person name="Schroeter R."/>
            <person name="Scoffone F."/>
            <person name="Sekiguchi J."/>
            <person name="Sekowska A."/>
            <person name="Seror S.J."/>
            <person name="Serror P."/>
            <person name="Shin B.-S."/>
            <person name="Soldo B."/>
            <person name="Sorokin A."/>
            <person name="Tacconi E."/>
            <person name="Takagi T."/>
            <person name="Takahashi H."/>
            <person name="Takemaru K."/>
            <person name="Takeuchi M."/>
            <person name="Tamakoshi A."/>
            <person name="Tanaka T."/>
            <person name="Terpstra P."/>
            <person name="Tognoni A."/>
            <person name="Tosato V."/>
            <person name="Uchiyama S."/>
            <person name="Vandenbol M."/>
            <person name="Vannier F."/>
            <person name="Vassarotti A."/>
            <person name="Viari A."/>
            <person name="Wambutt R."/>
            <person name="Wedler E."/>
            <person name="Wedler H."/>
            <person name="Weitzenegger T."/>
            <person name="Winters P."/>
            <person name="Wipat A."/>
            <person name="Yamamoto H."/>
            <person name="Yamane K."/>
            <person name="Yasumoto K."/>
            <person name="Yata K."/>
            <person name="Yoshida K."/>
            <person name="Yoshikawa H.-F."/>
            <person name="Zumstein E."/>
            <person name="Yoshikawa H."/>
            <person name="Danchin A."/>
        </authorList>
    </citation>
    <scope>NUCLEOTIDE SEQUENCE [LARGE SCALE GENOMIC DNA]</scope>
    <source>
        <strain>168</strain>
    </source>
</reference>
<accession>O05241</accession>
<feature type="chain" id="PRO_0000088374" description="UPF0053 protein YugS">
    <location>
        <begin position="1"/>
        <end position="429"/>
    </location>
</feature>
<feature type="transmembrane region" description="Helical" evidence="1">
    <location>
        <begin position="1"/>
        <end position="21"/>
    </location>
</feature>
<feature type="transmembrane region" description="Helical" evidence="1">
    <location>
        <begin position="61"/>
        <end position="81"/>
    </location>
</feature>
<feature type="transmembrane region" description="Helical" evidence="1">
    <location>
        <begin position="101"/>
        <end position="121"/>
    </location>
</feature>
<feature type="transmembrane region" description="Helical" evidence="1">
    <location>
        <begin position="133"/>
        <end position="153"/>
    </location>
</feature>
<feature type="domain" description="CNNM transmembrane" evidence="3">
    <location>
        <begin position="1"/>
        <end position="201"/>
    </location>
</feature>
<feature type="domain" description="CBS 1" evidence="2">
    <location>
        <begin position="220"/>
        <end position="281"/>
    </location>
</feature>
<feature type="domain" description="CBS 2" evidence="2">
    <location>
        <begin position="284"/>
        <end position="341"/>
    </location>
</feature>
<sequence length="429" mass="48902">MLILQLIAIFVLIGITAVFVAAEFAIVKIRGSKINQLIESGDSRALAAHKIISNLDEYLSACQLGITITALGLGWLGEPTFERFLHPLFTMTGIPEPFNHIVTFVVAFIIVTFLHVVMGELAPKTVSIQKAEAVSLWIAKPLIWFYKITYPFIKALNGSASFLVKLFGFHSVKEHQVVISEEELRLILSESYEKGEINQSEFRYVNKIFEFDNRVAREIMIPRTEIAVISLEQSLEEAIHHIINERYTRYPVIKDDKDHILGIINSKDMFKAYFLGQPIKLNQIMRPVIRVIESIPVQQLLIRMQKERIHMAILVDEYGGTAGLVTVEDIIEEIVGEIRDEYDQDETPHILKKGEHHYVMDGKALIDEVNDLLDIAIENEEIDTIAGWLLTQKMELKAGDVIHAEGCEFKILDAEDHHIRFVEIKKTDF</sequence>
<proteinExistence type="inferred from homology"/>
<gene>
    <name type="primary">yugS</name>
    <name type="ordered locus">BSU31300</name>
</gene>
<dbReference type="EMBL" id="Z93935">
    <property type="protein sequence ID" value="CAB07925.1"/>
    <property type="status" value="ALT_INIT"/>
    <property type="molecule type" value="Genomic_DNA"/>
</dbReference>
<dbReference type="EMBL" id="AL009126">
    <property type="protein sequence ID" value="CAB15119.2"/>
    <property type="molecule type" value="Genomic_DNA"/>
</dbReference>
<dbReference type="PIR" id="G70011">
    <property type="entry name" value="G70011"/>
</dbReference>
<dbReference type="RefSeq" id="NP_391008.2">
    <property type="nucleotide sequence ID" value="NC_000964.3"/>
</dbReference>
<dbReference type="RefSeq" id="WP_009968059.1">
    <property type="nucleotide sequence ID" value="NZ_OZ025638.1"/>
</dbReference>
<dbReference type="SMR" id="O05241"/>
<dbReference type="FunCoup" id="O05241">
    <property type="interactions" value="702"/>
</dbReference>
<dbReference type="STRING" id="224308.BSU31300"/>
<dbReference type="PaxDb" id="224308-BSU31300"/>
<dbReference type="EnsemblBacteria" id="CAB15119">
    <property type="protein sequence ID" value="CAB15119"/>
    <property type="gene ID" value="BSU_31300"/>
</dbReference>
<dbReference type="GeneID" id="937160"/>
<dbReference type="KEGG" id="bsu:BSU31300"/>
<dbReference type="PATRIC" id="fig|224308.179.peg.3392"/>
<dbReference type="eggNOG" id="COG1253">
    <property type="taxonomic scope" value="Bacteria"/>
</dbReference>
<dbReference type="InParanoid" id="O05241"/>
<dbReference type="OrthoDB" id="9798188at2"/>
<dbReference type="PhylomeDB" id="O05241"/>
<dbReference type="BioCyc" id="BSUB:BSU31300-MONOMER"/>
<dbReference type="Proteomes" id="UP000001570">
    <property type="component" value="Chromosome"/>
</dbReference>
<dbReference type="GO" id="GO:0005886">
    <property type="term" value="C:plasma membrane"/>
    <property type="evidence" value="ECO:0007669"/>
    <property type="project" value="UniProtKB-SubCell"/>
</dbReference>
<dbReference type="GO" id="GO:0050660">
    <property type="term" value="F:flavin adenine dinucleotide binding"/>
    <property type="evidence" value="ECO:0007669"/>
    <property type="project" value="InterPro"/>
</dbReference>
<dbReference type="CDD" id="cd04590">
    <property type="entry name" value="CBS_pair_CorC_HlyC_assoc"/>
    <property type="match status" value="1"/>
</dbReference>
<dbReference type="FunFam" id="3.10.580.10:FF:000002">
    <property type="entry name" value="Magnesium/cobalt efflux protein CorC"/>
    <property type="match status" value="1"/>
</dbReference>
<dbReference type="Gene3D" id="3.30.465.10">
    <property type="match status" value="1"/>
</dbReference>
<dbReference type="Gene3D" id="3.10.580.10">
    <property type="entry name" value="CBS-domain"/>
    <property type="match status" value="1"/>
</dbReference>
<dbReference type="InterPro" id="IPR000644">
    <property type="entry name" value="CBS_dom"/>
</dbReference>
<dbReference type="InterPro" id="IPR046342">
    <property type="entry name" value="CBS_dom_sf"/>
</dbReference>
<dbReference type="InterPro" id="IPR002550">
    <property type="entry name" value="CNNM"/>
</dbReference>
<dbReference type="InterPro" id="IPR036318">
    <property type="entry name" value="FAD-bd_PCMH-like_sf"/>
</dbReference>
<dbReference type="InterPro" id="IPR016169">
    <property type="entry name" value="FAD-bd_PCMH_sub2"/>
</dbReference>
<dbReference type="InterPro" id="IPR044751">
    <property type="entry name" value="Ion_transp-like_CBS"/>
</dbReference>
<dbReference type="InterPro" id="IPR005170">
    <property type="entry name" value="Transptr-assoc_dom"/>
</dbReference>
<dbReference type="InterPro" id="IPR051676">
    <property type="entry name" value="UPF0053_domain"/>
</dbReference>
<dbReference type="PANTHER" id="PTHR43099">
    <property type="entry name" value="UPF0053 PROTEIN YRKA"/>
    <property type="match status" value="1"/>
</dbReference>
<dbReference type="PANTHER" id="PTHR43099:SF2">
    <property type="entry name" value="UPF0053 PROTEIN YRKA"/>
    <property type="match status" value="1"/>
</dbReference>
<dbReference type="Pfam" id="PF00571">
    <property type="entry name" value="CBS"/>
    <property type="match status" value="2"/>
</dbReference>
<dbReference type="Pfam" id="PF01595">
    <property type="entry name" value="CNNM"/>
    <property type="match status" value="1"/>
</dbReference>
<dbReference type="Pfam" id="PF03471">
    <property type="entry name" value="CorC_HlyC"/>
    <property type="match status" value="1"/>
</dbReference>
<dbReference type="SMART" id="SM01091">
    <property type="entry name" value="CorC_HlyC"/>
    <property type="match status" value="1"/>
</dbReference>
<dbReference type="SUPFAM" id="SSF54631">
    <property type="entry name" value="CBS-domain pair"/>
    <property type="match status" value="1"/>
</dbReference>
<dbReference type="SUPFAM" id="SSF56176">
    <property type="entry name" value="FAD-binding/transporter-associated domain-like"/>
    <property type="match status" value="1"/>
</dbReference>
<dbReference type="PROSITE" id="PS51371">
    <property type="entry name" value="CBS"/>
    <property type="match status" value="2"/>
</dbReference>
<dbReference type="PROSITE" id="PS51846">
    <property type="entry name" value="CNNM"/>
    <property type="match status" value="1"/>
</dbReference>
<name>YUGS_BACSU</name>
<evidence type="ECO:0000255" key="1"/>
<evidence type="ECO:0000255" key="2">
    <source>
        <dbReference type="PROSITE-ProRule" id="PRU00703"/>
    </source>
</evidence>
<evidence type="ECO:0000255" key="3">
    <source>
        <dbReference type="PROSITE-ProRule" id="PRU01193"/>
    </source>
</evidence>
<evidence type="ECO:0000305" key="4"/>